<dbReference type="EMBL" id="AP008955">
    <property type="protein sequence ID" value="BAH44823.1"/>
    <property type="molecule type" value="Genomic_DNA"/>
</dbReference>
<dbReference type="RefSeq" id="WP_007717680.1">
    <property type="nucleotide sequence ID" value="NC_012491.1"/>
</dbReference>
<dbReference type="SMR" id="C0ZGB4"/>
<dbReference type="STRING" id="358681.BBR47_38460"/>
<dbReference type="GeneID" id="87584164"/>
<dbReference type="KEGG" id="bbe:BBR47_38460"/>
<dbReference type="eggNOG" id="COG2001">
    <property type="taxonomic scope" value="Bacteria"/>
</dbReference>
<dbReference type="HOGENOM" id="CLU_107907_0_5_9"/>
<dbReference type="Proteomes" id="UP000001877">
    <property type="component" value="Chromosome"/>
</dbReference>
<dbReference type="GO" id="GO:0005737">
    <property type="term" value="C:cytoplasm"/>
    <property type="evidence" value="ECO:0007669"/>
    <property type="project" value="UniProtKB-UniRule"/>
</dbReference>
<dbReference type="GO" id="GO:0009295">
    <property type="term" value="C:nucleoid"/>
    <property type="evidence" value="ECO:0007669"/>
    <property type="project" value="UniProtKB-SubCell"/>
</dbReference>
<dbReference type="GO" id="GO:0003700">
    <property type="term" value="F:DNA-binding transcription factor activity"/>
    <property type="evidence" value="ECO:0007669"/>
    <property type="project" value="UniProtKB-UniRule"/>
</dbReference>
<dbReference type="GO" id="GO:0000976">
    <property type="term" value="F:transcription cis-regulatory region binding"/>
    <property type="evidence" value="ECO:0007669"/>
    <property type="project" value="TreeGrafter"/>
</dbReference>
<dbReference type="GO" id="GO:2000143">
    <property type="term" value="P:negative regulation of DNA-templated transcription initiation"/>
    <property type="evidence" value="ECO:0007669"/>
    <property type="project" value="TreeGrafter"/>
</dbReference>
<dbReference type="CDD" id="cd16321">
    <property type="entry name" value="MraZ_C"/>
    <property type="match status" value="1"/>
</dbReference>
<dbReference type="CDD" id="cd16320">
    <property type="entry name" value="MraZ_N"/>
    <property type="match status" value="1"/>
</dbReference>
<dbReference type="FunFam" id="3.40.1550.20:FF:000002">
    <property type="entry name" value="Transcriptional regulator MraZ"/>
    <property type="match status" value="1"/>
</dbReference>
<dbReference type="Gene3D" id="3.40.1550.20">
    <property type="entry name" value="Transcriptional regulator MraZ domain"/>
    <property type="match status" value="1"/>
</dbReference>
<dbReference type="HAMAP" id="MF_01008">
    <property type="entry name" value="MraZ"/>
    <property type="match status" value="1"/>
</dbReference>
<dbReference type="InterPro" id="IPR003444">
    <property type="entry name" value="MraZ"/>
</dbReference>
<dbReference type="InterPro" id="IPR035644">
    <property type="entry name" value="MraZ_C"/>
</dbReference>
<dbReference type="InterPro" id="IPR020603">
    <property type="entry name" value="MraZ_dom"/>
</dbReference>
<dbReference type="InterPro" id="IPR035642">
    <property type="entry name" value="MraZ_N"/>
</dbReference>
<dbReference type="InterPro" id="IPR038619">
    <property type="entry name" value="MraZ_sf"/>
</dbReference>
<dbReference type="InterPro" id="IPR007159">
    <property type="entry name" value="SpoVT-AbrB_dom"/>
</dbReference>
<dbReference type="InterPro" id="IPR037914">
    <property type="entry name" value="SpoVT-AbrB_sf"/>
</dbReference>
<dbReference type="NCBIfam" id="TIGR00242">
    <property type="entry name" value="division/cell wall cluster transcriptional repressor MraZ"/>
    <property type="match status" value="1"/>
</dbReference>
<dbReference type="PANTHER" id="PTHR34701">
    <property type="entry name" value="TRANSCRIPTIONAL REGULATOR MRAZ"/>
    <property type="match status" value="1"/>
</dbReference>
<dbReference type="PANTHER" id="PTHR34701:SF1">
    <property type="entry name" value="TRANSCRIPTIONAL REGULATOR MRAZ"/>
    <property type="match status" value="1"/>
</dbReference>
<dbReference type="Pfam" id="PF02381">
    <property type="entry name" value="MraZ"/>
    <property type="match status" value="2"/>
</dbReference>
<dbReference type="SUPFAM" id="SSF89447">
    <property type="entry name" value="AbrB/MazE/MraZ-like"/>
    <property type="match status" value="1"/>
</dbReference>
<dbReference type="PROSITE" id="PS51740">
    <property type="entry name" value="SPOVT_ABRB"/>
    <property type="match status" value="2"/>
</dbReference>
<organism>
    <name type="scientific">Brevibacillus brevis (strain 47 / JCM 6285 / NBRC 100599)</name>
    <dbReference type="NCBI Taxonomy" id="358681"/>
    <lineage>
        <taxon>Bacteria</taxon>
        <taxon>Bacillati</taxon>
        <taxon>Bacillota</taxon>
        <taxon>Bacilli</taxon>
        <taxon>Bacillales</taxon>
        <taxon>Paenibacillaceae</taxon>
        <taxon>Brevibacillus</taxon>
    </lineage>
</organism>
<name>MRAZ_BREBN</name>
<sequence length="143" mass="16610">MFMGEYQHSIDEKGRLTIPAKFREGLGTSFVITRGLDQCLFAYPQDEWKQLEERLKSLPFTKADARAFTRFFFSGATECEWDKQGRVNIPPNLREHAGMQKECVIIGVSNRVEVWSKERWEDYFAQSEGSFGEIAEKLVDFNL</sequence>
<feature type="chain" id="PRO_1000148848" description="Transcriptional regulator MraZ">
    <location>
        <begin position="1"/>
        <end position="143"/>
    </location>
</feature>
<feature type="domain" description="SpoVT-AbrB 1" evidence="2">
    <location>
        <begin position="5"/>
        <end position="47"/>
    </location>
</feature>
<feature type="domain" description="SpoVT-AbrB 2" evidence="2">
    <location>
        <begin position="76"/>
        <end position="119"/>
    </location>
</feature>
<accession>C0ZGB4</accession>
<reference key="1">
    <citation type="submission" date="2005-03" db="EMBL/GenBank/DDBJ databases">
        <title>Brevibacillus brevis strain 47, complete genome.</title>
        <authorList>
            <person name="Hosoyama A."/>
            <person name="Yamada R."/>
            <person name="Hongo Y."/>
            <person name="Terui Y."/>
            <person name="Ankai A."/>
            <person name="Masuyama W."/>
            <person name="Sekiguchi M."/>
            <person name="Takeda T."/>
            <person name="Asano K."/>
            <person name="Ohji S."/>
            <person name="Ichikawa N."/>
            <person name="Narita S."/>
            <person name="Aoki N."/>
            <person name="Miura H."/>
            <person name="Matsushita S."/>
            <person name="Sekigawa T."/>
            <person name="Yamagata H."/>
            <person name="Yoshikawa H."/>
            <person name="Udaka S."/>
            <person name="Tanikawa S."/>
            <person name="Fujita N."/>
        </authorList>
    </citation>
    <scope>NUCLEOTIDE SEQUENCE [LARGE SCALE GENOMIC DNA]</scope>
    <source>
        <strain>47 / JCM 6285 / NBRC 100599</strain>
    </source>
</reference>
<evidence type="ECO:0000255" key="1">
    <source>
        <dbReference type="HAMAP-Rule" id="MF_01008"/>
    </source>
</evidence>
<evidence type="ECO:0000255" key="2">
    <source>
        <dbReference type="PROSITE-ProRule" id="PRU01076"/>
    </source>
</evidence>
<keyword id="KW-0963">Cytoplasm</keyword>
<keyword id="KW-0238">DNA-binding</keyword>
<keyword id="KW-1185">Reference proteome</keyword>
<keyword id="KW-0677">Repeat</keyword>
<keyword id="KW-0804">Transcription</keyword>
<keyword id="KW-0805">Transcription regulation</keyword>
<gene>
    <name evidence="1" type="primary">mraZ</name>
    <name type="ordered locus">BBR47_38460</name>
</gene>
<comment type="subunit">
    <text evidence="1">Forms oligomers.</text>
</comment>
<comment type="subcellular location">
    <subcellularLocation>
        <location evidence="1">Cytoplasm</location>
        <location evidence="1">Nucleoid</location>
    </subcellularLocation>
</comment>
<comment type="similarity">
    <text evidence="1">Belongs to the MraZ family.</text>
</comment>
<protein>
    <recommendedName>
        <fullName>Transcriptional regulator MraZ</fullName>
    </recommendedName>
</protein>
<proteinExistence type="inferred from homology"/>